<reference key="1">
    <citation type="journal article" date="2006" name="Nat. Biotechnol.">
        <title>Complete genome of the mutualistic, N2-fixing grass endophyte Azoarcus sp. strain BH72.</title>
        <authorList>
            <person name="Krause A."/>
            <person name="Ramakumar A."/>
            <person name="Bartels D."/>
            <person name="Battistoni F."/>
            <person name="Bekel T."/>
            <person name="Boch J."/>
            <person name="Boehm M."/>
            <person name="Friedrich F."/>
            <person name="Hurek T."/>
            <person name="Krause L."/>
            <person name="Linke B."/>
            <person name="McHardy A.C."/>
            <person name="Sarkar A."/>
            <person name="Schneiker S."/>
            <person name="Syed A.A."/>
            <person name="Thauer R."/>
            <person name="Vorhoelter F.-J."/>
            <person name="Weidner S."/>
            <person name="Puehler A."/>
            <person name="Reinhold-Hurek B."/>
            <person name="Kaiser O."/>
            <person name="Goesmann A."/>
        </authorList>
    </citation>
    <scope>NUCLEOTIDE SEQUENCE [LARGE SCALE GENOMIC DNA]</scope>
    <source>
        <strain>BH72</strain>
    </source>
</reference>
<evidence type="ECO:0000255" key="1">
    <source>
        <dbReference type="HAMAP-Rule" id="MF_00015"/>
    </source>
</evidence>
<gene>
    <name evidence="1" type="primary">lexA</name>
    <name type="ordered locus">azo2064</name>
</gene>
<sequence>MNARNEQLTSRQQEILDFIRQTVESEGRPPTRAEVCSAFGFKSPNAAETHLRALAAKGAILLEEGRARGIRLAEALGLPLVGRVAAGNPILAAEHVEARIQFDPALFSPRADYLLRVRGMSMRDAGILDGDLIAVHRSHEARNGQVVVARIDDDVTVKTLRRNGPIVELLPANPDFDPIVVDTRSAALELEGIMVGLIRTDH</sequence>
<comment type="function">
    <text evidence="1">Represses a number of genes involved in the response to DNA damage (SOS response), including recA and lexA. In the presence of single-stranded DNA, RecA interacts with LexA causing an autocatalytic cleavage which disrupts the DNA-binding part of LexA, leading to derepression of the SOS regulon and eventually DNA repair.</text>
</comment>
<comment type="catalytic activity">
    <reaction evidence="1">
        <text>Hydrolysis of Ala-|-Gly bond in repressor LexA.</text>
        <dbReference type="EC" id="3.4.21.88"/>
    </reaction>
</comment>
<comment type="subunit">
    <text evidence="1">Homodimer.</text>
</comment>
<comment type="similarity">
    <text evidence="1">Belongs to the peptidase S24 family.</text>
</comment>
<dbReference type="EC" id="3.4.21.88" evidence="1"/>
<dbReference type="EMBL" id="AM406670">
    <property type="protein sequence ID" value="CAL94681.1"/>
    <property type="molecule type" value="Genomic_DNA"/>
</dbReference>
<dbReference type="RefSeq" id="WP_011765795.1">
    <property type="nucleotide sequence ID" value="NC_008702.1"/>
</dbReference>
<dbReference type="SMR" id="A1K776"/>
<dbReference type="STRING" id="62928.azo2064"/>
<dbReference type="MEROPS" id="S24.001"/>
<dbReference type="KEGG" id="aoa:dqs_2190"/>
<dbReference type="KEGG" id="azo:azo2064"/>
<dbReference type="eggNOG" id="COG1974">
    <property type="taxonomic scope" value="Bacteria"/>
</dbReference>
<dbReference type="HOGENOM" id="CLU_066192_45_3_4"/>
<dbReference type="OrthoDB" id="9802364at2"/>
<dbReference type="Proteomes" id="UP000002588">
    <property type="component" value="Chromosome"/>
</dbReference>
<dbReference type="GO" id="GO:0003677">
    <property type="term" value="F:DNA binding"/>
    <property type="evidence" value="ECO:0007669"/>
    <property type="project" value="UniProtKB-UniRule"/>
</dbReference>
<dbReference type="GO" id="GO:0004252">
    <property type="term" value="F:serine-type endopeptidase activity"/>
    <property type="evidence" value="ECO:0007669"/>
    <property type="project" value="UniProtKB-UniRule"/>
</dbReference>
<dbReference type="GO" id="GO:0006281">
    <property type="term" value="P:DNA repair"/>
    <property type="evidence" value="ECO:0007669"/>
    <property type="project" value="UniProtKB-UniRule"/>
</dbReference>
<dbReference type="GO" id="GO:0006260">
    <property type="term" value="P:DNA replication"/>
    <property type="evidence" value="ECO:0007669"/>
    <property type="project" value="UniProtKB-UniRule"/>
</dbReference>
<dbReference type="GO" id="GO:0045892">
    <property type="term" value="P:negative regulation of DNA-templated transcription"/>
    <property type="evidence" value="ECO:0007669"/>
    <property type="project" value="UniProtKB-UniRule"/>
</dbReference>
<dbReference type="GO" id="GO:0006508">
    <property type="term" value="P:proteolysis"/>
    <property type="evidence" value="ECO:0007669"/>
    <property type="project" value="InterPro"/>
</dbReference>
<dbReference type="GO" id="GO:0009432">
    <property type="term" value="P:SOS response"/>
    <property type="evidence" value="ECO:0007669"/>
    <property type="project" value="UniProtKB-UniRule"/>
</dbReference>
<dbReference type="CDD" id="cd06529">
    <property type="entry name" value="S24_LexA-like"/>
    <property type="match status" value="1"/>
</dbReference>
<dbReference type="FunFam" id="1.10.10.10:FF:000009">
    <property type="entry name" value="LexA repressor"/>
    <property type="match status" value="1"/>
</dbReference>
<dbReference type="FunFam" id="2.10.109.10:FF:000001">
    <property type="entry name" value="LexA repressor"/>
    <property type="match status" value="1"/>
</dbReference>
<dbReference type="Gene3D" id="2.10.109.10">
    <property type="entry name" value="Umud Fragment, subunit A"/>
    <property type="match status" value="1"/>
</dbReference>
<dbReference type="Gene3D" id="1.10.10.10">
    <property type="entry name" value="Winged helix-like DNA-binding domain superfamily/Winged helix DNA-binding domain"/>
    <property type="match status" value="1"/>
</dbReference>
<dbReference type="HAMAP" id="MF_00015">
    <property type="entry name" value="LexA"/>
    <property type="match status" value="1"/>
</dbReference>
<dbReference type="InterPro" id="IPR006200">
    <property type="entry name" value="LexA"/>
</dbReference>
<dbReference type="InterPro" id="IPR039418">
    <property type="entry name" value="LexA-like"/>
</dbReference>
<dbReference type="InterPro" id="IPR036286">
    <property type="entry name" value="LexA/Signal_pep-like_sf"/>
</dbReference>
<dbReference type="InterPro" id="IPR006199">
    <property type="entry name" value="LexA_DNA-bd_dom"/>
</dbReference>
<dbReference type="InterPro" id="IPR050077">
    <property type="entry name" value="LexA_repressor"/>
</dbReference>
<dbReference type="InterPro" id="IPR006197">
    <property type="entry name" value="Peptidase_S24_LexA"/>
</dbReference>
<dbReference type="InterPro" id="IPR015927">
    <property type="entry name" value="Peptidase_S24_S26A/B/C"/>
</dbReference>
<dbReference type="InterPro" id="IPR036388">
    <property type="entry name" value="WH-like_DNA-bd_sf"/>
</dbReference>
<dbReference type="InterPro" id="IPR036390">
    <property type="entry name" value="WH_DNA-bd_sf"/>
</dbReference>
<dbReference type="NCBIfam" id="TIGR00498">
    <property type="entry name" value="lexA"/>
    <property type="match status" value="1"/>
</dbReference>
<dbReference type="PANTHER" id="PTHR33516">
    <property type="entry name" value="LEXA REPRESSOR"/>
    <property type="match status" value="1"/>
</dbReference>
<dbReference type="PANTHER" id="PTHR33516:SF2">
    <property type="entry name" value="LEXA REPRESSOR-RELATED"/>
    <property type="match status" value="1"/>
</dbReference>
<dbReference type="Pfam" id="PF01726">
    <property type="entry name" value="LexA_DNA_bind"/>
    <property type="match status" value="1"/>
</dbReference>
<dbReference type="Pfam" id="PF00717">
    <property type="entry name" value="Peptidase_S24"/>
    <property type="match status" value="1"/>
</dbReference>
<dbReference type="PRINTS" id="PR00726">
    <property type="entry name" value="LEXASERPTASE"/>
</dbReference>
<dbReference type="SUPFAM" id="SSF51306">
    <property type="entry name" value="LexA/Signal peptidase"/>
    <property type="match status" value="1"/>
</dbReference>
<dbReference type="SUPFAM" id="SSF46785">
    <property type="entry name" value="Winged helix' DNA-binding domain"/>
    <property type="match status" value="1"/>
</dbReference>
<keyword id="KW-0068">Autocatalytic cleavage</keyword>
<keyword id="KW-0227">DNA damage</keyword>
<keyword id="KW-0234">DNA repair</keyword>
<keyword id="KW-0235">DNA replication</keyword>
<keyword id="KW-0238">DNA-binding</keyword>
<keyword id="KW-0378">Hydrolase</keyword>
<keyword id="KW-1185">Reference proteome</keyword>
<keyword id="KW-0678">Repressor</keyword>
<keyword id="KW-0742">SOS response</keyword>
<keyword id="KW-0804">Transcription</keyword>
<keyword id="KW-0805">Transcription regulation</keyword>
<protein>
    <recommendedName>
        <fullName evidence="1">LexA repressor</fullName>
        <ecNumber evidence="1">3.4.21.88</ecNumber>
    </recommendedName>
</protein>
<proteinExistence type="inferred from homology"/>
<name>LEXA_AZOSB</name>
<feature type="chain" id="PRO_1000001257" description="LexA repressor">
    <location>
        <begin position="1"/>
        <end position="202"/>
    </location>
</feature>
<feature type="DNA-binding region" description="H-T-H motif" evidence="1">
    <location>
        <begin position="32"/>
        <end position="52"/>
    </location>
</feature>
<feature type="active site" description="For autocatalytic cleavage activity" evidence="1">
    <location>
        <position position="121"/>
    </location>
</feature>
<feature type="active site" description="For autocatalytic cleavage activity" evidence="1">
    <location>
        <position position="158"/>
    </location>
</feature>
<feature type="site" description="Cleavage; by autolysis" evidence="1">
    <location>
        <begin position="86"/>
        <end position="87"/>
    </location>
</feature>
<organism>
    <name type="scientific">Azoarcus sp. (strain BH72)</name>
    <dbReference type="NCBI Taxonomy" id="418699"/>
    <lineage>
        <taxon>Bacteria</taxon>
        <taxon>Pseudomonadati</taxon>
        <taxon>Pseudomonadota</taxon>
        <taxon>Betaproteobacteria</taxon>
        <taxon>Rhodocyclales</taxon>
        <taxon>Zoogloeaceae</taxon>
        <taxon>Azoarcus</taxon>
    </lineage>
</organism>
<accession>A1K776</accession>